<comment type="function">
    <text evidence="1">One of the primary rRNA binding proteins, it binds directly near the 3'-end of the 23S rRNA, where it nucleates assembly of the 50S subunit.</text>
</comment>
<comment type="subunit">
    <text evidence="1">Part of the 50S ribosomal subunit. Forms a cluster with proteins L14 and L19.</text>
</comment>
<comment type="PTM">
    <text>Methylated, on either Lys-155 or Lys-158.</text>
</comment>
<comment type="PTM">
    <text evidence="1">Methylated by PrmB.</text>
</comment>
<comment type="mass spectrometry"/>
<comment type="similarity">
    <text evidence="1">Belongs to the universal ribosomal protein uL3 family.</text>
</comment>
<reference key="1">
    <citation type="journal article" date="2004" name="Nat. Biotechnol.">
        <title>Complete genome sequence of the metabolically versatile photosynthetic bacterium Rhodopseudomonas palustris.</title>
        <authorList>
            <person name="Larimer F.W."/>
            <person name="Chain P."/>
            <person name="Hauser L."/>
            <person name="Lamerdin J.E."/>
            <person name="Malfatti S."/>
            <person name="Do L."/>
            <person name="Land M.L."/>
            <person name="Pelletier D.A."/>
            <person name="Beatty J.T."/>
            <person name="Lang A.S."/>
            <person name="Tabita F.R."/>
            <person name="Gibson J.L."/>
            <person name="Hanson T.E."/>
            <person name="Bobst C."/>
            <person name="Torres y Torres J.L."/>
            <person name="Peres C."/>
            <person name="Harrison F.H."/>
            <person name="Gibson J."/>
            <person name="Harwood C.S."/>
        </authorList>
    </citation>
    <scope>NUCLEOTIDE SEQUENCE [LARGE SCALE GENOMIC DNA]</scope>
    <source>
        <strain>ATCC BAA-98 / CGA009</strain>
    </source>
</reference>
<reference key="2">
    <citation type="journal article" date="2004" name="J. Proteome Res.">
        <title>Characterization of the 70S ribosome from Rhodopseudomonas palustris using an integrated 'top-down' and 'bottom-up' mass spectrometric approach.</title>
        <authorList>
            <person name="Strader M.B."/>
            <person name="VerBerkmoes N.C."/>
            <person name="Tabb D.L."/>
            <person name="Connelly H.M."/>
            <person name="Barton J.W."/>
            <person name="Bruce B.D."/>
            <person name="Pelletier D.A."/>
            <person name="Davison B.H."/>
            <person name="Hettich R.L."/>
            <person name="Larimer F.W."/>
            <person name="Hurst G.B."/>
        </authorList>
    </citation>
    <scope>PROTEIN SEQUENCE OF 143-170</scope>
    <scope>POST-TRANSLATIONAL MODIFICATIONS</scope>
    <scope>MASS SPECTROMETRY</scope>
    <source>
        <strain>ATCC BAA-98 / CGA009</strain>
    </source>
</reference>
<sequence>MRSGVIAQKVGMTRVFTEAGEHIPVTVLKLGNCQVLGHRTKEKNGYVALQVGSGSRKTVYMPKAERGQFAAAKVEPKRKVEEFRVSEDALLPVGAEIQADHFVVGQFVDVTGTSTGKGFAGGMKRWNFGGLRATHGVSVSHRSIGSTGGRQDPGKTFKNKKMPGHMGVDRVTTLNLRVVQTDVERGLILVEGAVPGTKGGWIRVRDAVKKALPADAPKPGKFRLANGDAAAEAPAAEQEGA</sequence>
<dbReference type="EMBL" id="BX572603">
    <property type="protein sequence ID" value="CAE28691.1"/>
    <property type="molecule type" value="Genomic_DNA"/>
</dbReference>
<dbReference type="RefSeq" id="WP_011158795.1">
    <property type="nucleotide sequence ID" value="NZ_CP116810.1"/>
</dbReference>
<dbReference type="SMR" id="P60456"/>
<dbReference type="IntAct" id="P60456">
    <property type="interactions" value="1"/>
</dbReference>
<dbReference type="STRING" id="258594.RPA3250"/>
<dbReference type="GeneID" id="66894336"/>
<dbReference type="eggNOG" id="COG0087">
    <property type="taxonomic scope" value="Bacteria"/>
</dbReference>
<dbReference type="HOGENOM" id="CLU_044142_2_0_5"/>
<dbReference type="PhylomeDB" id="P60456"/>
<dbReference type="GO" id="GO:0022625">
    <property type="term" value="C:cytosolic large ribosomal subunit"/>
    <property type="evidence" value="ECO:0007669"/>
    <property type="project" value="TreeGrafter"/>
</dbReference>
<dbReference type="GO" id="GO:0019843">
    <property type="term" value="F:rRNA binding"/>
    <property type="evidence" value="ECO:0007669"/>
    <property type="project" value="UniProtKB-UniRule"/>
</dbReference>
<dbReference type="GO" id="GO:0003735">
    <property type="term" value="F:structural constituent of ribosome"/>
    <property type="evidence" value="ECO:0007669"/>
    <property type="project" value="InterPro"/>
</dbReference>
<dbReference type="GO" id="GO:0006412">
    <property type="term" value="P:translation"/>
    <property type="evidence" value="ECO:0007669"/>
    <property type="project" value="UniProtKB-UniRule"/>
</dbReference>
<dbReference type="FunFam" id="2.40.30.10:FF:000004">
    <property type="entry name" value="50S ribosomal protein L3"/>
    <property type="match status" value="1"/>
</dbReference>
<dbReference type="FunFam" id="3.30.160.810:FF:000001">
    <property type="entry name" value="50S ribosomal protein L3"/>
    <property type="match status" value="1"/>
</dbReference>
<dbReference type="Gene3D" id="3.30.160.810">
    <property type="match status" value="1"/>
</dbReference>
<dbReference type="Gene3D" id="2.40.30.10">
    <property type="entry name" value="Translation factors"/>
    <property type="match status" value="1"/>
</dbReference>
<dbReference type="HAMAP" id="MF_01325_B">
    <property type="entry name" value="Ribosomal_uL3_B"/>
    <property type="match status" value="1"/>
</dbReference>
<dbReference type="InterPro" id="IPR000597">
    <property type="entry name" value="Ribosomal_uL3"/>
</dbReference>
<dbReference type="InterPro" id="IPR019927">
    <property type="entry name" value="Ribosomal_uL3_bac/org-type"/>
</dbReference>
<dbReference type="InterPro" id="IPR019926">
    <property type="entry name" value="Ribosomal_uL3_CS"/>
</dbReference>
<dbReference type="InterPro" id="IPR009000">
    <property type="entry name" value="Transl_B-barrel_sf"/>
</dbReference>
<dbReference type="NCBIfam" id="TIGR03625">
    <property type="entry name" value="L3_bact"/>
    <property type="match status" value="1"/>
</dbReference>
<dbReference type="PANTHER" id="PTHR11229">
    <property type="entry name" value="50S RIBOSOMAL PROTEIN L3"/>
    <property type="match status" value="1"/>
</dbReference>
<dbReference type="PANTHER" id="PTHR11229:SF16">
    <property type="entry name" value="LARGE RIBOSOMAL SUBUNIT PROTEIN UL3C"/>
    <property type="match status" value="1"/>
</dbReference>
<dbReference type="Pfam" id="PF00297">
    <property type="entry name" value="Ribosomal_L3"/>
    <property type="match status" value="1"/>
</dbReference>
<dbReference type="SUPFAM" id="SSF50447">
    <property type="entry name" value="Translation proteins"/>
    <property type="match status" value="1"/>
</dbReference>
<dbReference type="PROSITE" id="PS00474">
    <property type="entry name" value="RIBOSOMAL_L3"/>
    <property type="match status" value="1"/>
</dbReference>
<protein>
    <recommendedName>
        <fullName evidence="1">Large ribosomal subunit protein uL3</fullName>
    </recommendedName>
    <alternativeName>
        <fullName evidence="4">50S ribosomal protein L3</fullName>
    </alternativeName>
    <alternativeName>
        <fullName>RRP-L3</fullName>
    </alternativeName>
</protein>
<feature type="chain" id="PRO_0000077145" description="Large ribosomal subunit protein uL3">
    <location>
        <begin position="1"/>
        <end position="241"/>
    </location>
</feature>
<feature type="region of interest" description="Disordered" evidence="2">
    <location>
        <begin position="139"/>
        <end position="166"/>
    </location>
</feature>
<feature type="region of interest" description="Disordered" evidence="2">
    <location>
        <begin position="214"/>
        <end position="241"/>
    </location>
</feature>
<feature type="compositionally biased region" description="Low complexity" evidence="2">
    <location>
        <begin position="229"/>
        <end position="241"/>
    </location>
</feature>
<feature type="modified residue" description="N5-methylglutamine" evidence="1">
    <location>
        <position position="151"/>
    </location>
</feature>
<organism>
    <name type="scientific">Rhodopseudomonas palustris (strain ATCC BAA-98 / CGA009)</name>
    <dbReference type="NCBI Taxonomy" id="258594"/>
    <lineage>
        <taxon>Bacteria</taxon>
        <taxon>Pseudomonadati</taxon>
        <taxon>Pseudomonadota</taxon>
        <taxon>Alphaproteobacteria</taxon>
        <taxon>Hyphomicrobiales</taxon>
        <taxon>Nitrobacteraceae</taxon>
        <taxon>Rhodopseudomonas</taxon>
    </lineage>
</organism>
<proteinExistence type="evidence at protein level"/>
<keyword id="KW-0903">Direct protein sequencing</keyword>
<keyword id="KW-0488">Methylation</keyword>
<keyword id="KW-0687">Ribonucleoprotein</keyword>
<keyword id="KW-0689">Ribosomal protein</keyword>
<keyword id="KW-0694">RNA-binding</keyword>
<keyword id="KW-0699">rRNA-binding</keyword>
<evidence type="ECO:0000255" key="1">
    <source>
        <dbReference type="HAMAP-Rule" id="MF_01325"/>
    </source>
</evidence>
<evidence type="ECO:0000256" key="2">
    <source>
        <dbReference type="SAM" id="MobiDB-lite"/>
    </source>
</evidence>
<evidence type="ECO:0000269" key="3">
    <source>
    </source>
</evidence>
<evidence type="ECO:0000305" key="4"/>
<accession>P60456</accession>
<name>RL3_RHOPA</name>
<gene>
    <name evidence="1" type="primary">rplC</name>
    <name type="ordered locus">RPA3250</name>
</gene>